<name>COPZ_ARCFU</name>
<organism>
    <name type="scientific">Archaeoglobus fulgidus (strain ATCC 49558 / DSM 4304 / JCM 9628 / NBRC 100126 / VC-16)</name>
    <dbReference type="NCBI Taxonomy" id="224325"/>
    <lineage>
        <taxon>Archaea</taxon>
        <taxon>Methanobacteriati</taxon>
        <taxon>Methanobacteriota</taxon>
        <taxon>Archaeoglobi</taxon>
        <taxon>Archaeoglobales</taxon>
        <taxon>Archaeoglobaceae</taxon>
        <taxon>Archaeoglobus</taxon>
    </lineage>
</organism>
<comment type="function">
    <text evidence="3 4">Chaperone that serves for the intracellular sequestration and transport of Cu(+). Delivers Cu(+) directly to the transmembrane transport sites of copper-exporting P-type ATPase A (CopA). Probably has a redox function due to the presence of a 2Fe-2S cluster and could reduce Cu(2+) to Cu(+).</text>
</comment>
<comment type="cofactor">
    <cofactor evidence="3">
        <name>[2Fe-2S] cluster</name>
        <dbReference type="ChEBI" id="CHEBI:190135"/>
    </cofactor>
    <text evidence="3">Binds 1 [2Fe-2S] cluster per subunit.</text>
</comment>
<comment type="subunit">
    <text evidence="1 3 4">Homodimer or homooligomer in the presence of copper ions (By similarity). Monomer in the absence of copper. Interacts with CopA probably in its Cu(+)-bound form.</text>
</comment>
<comment type="subcellular location">
    <subcellularLocation>
        <location evidence="5">Cytoplasm</location>
    </subcellularLocation>
</comment>
<sequence>MMRCPECSTEGWRVLPLTVGAHVKEGLWSKIKGDFYFCSLESCEVVYFNEQTVFRKGELKTRVGVKEREEPKPVCYCNRVTEKMLLEAAEKFGKEKAVEITGAGKGKWCVVTNPSGRCCHWHLERLGFPVGGEKKAAKRVEIKLDGLTCMGCVSAVKAALEEAGANVVEIGLDRAVVEVDEEAELQKLVEAVEGAGYSARLEKR</sequence>
<dbReference type="EMBL" id="AE000782">
    <property type="protein sequence ID" value="AAB90886.1"/>
    <property type="molecule type" value="Genomic_DNA"/>
</dbReference>
<dbReference type="PIR" id="B69293">
    <property type="entry name" value="B69293"/>
</dbReference>
<dbReference type="RefSeq" id="WP_010877853.1">
    <property type="nucleotide sequence ID" value="NC_000917.1"/>
</dbReference>
<dbReference type="PDB" id="2HU9">
    <property type="method" value="X-ray"/>
    <property type="resolution" value="1.78 A"/>
    <property type="chains" value="A/B=1-130"/>
</dbReference>
<dbReference type="PDBsum" id="2HU9"/>
<dbReference type="SMR" id="O29901"/>
<dbReference type="STRING" id="224325.AF_0346"/>
<dbReference type="TCDB" id="3.A.3.5.7">
    <property type="family name" value="the p-type atpase (p-atpase) superfamily"/>
</dbReference>
<dbReference type="PaxDb" id="224325-AF_0346"/>
<dbReference type="DNASU" id="1483560"/>
<dbReference type="EnsemblBacteria" id="AAB90886">
    <property type="protein sequence ID" value="AAB90886"/>
    <property type="gene ID" value="AF_0346"/>
</dbReference>
<dbReference type="GeneID" id="24793885"/>
<dbReference type="KEGG" id="afu:AF_0346"/>
<dbReference type="eggNOG" id="arCOG02764">
    <property type="taxonomic scope" value="Archaea"/>
</dbReference>
<dbReference type="HOGENOM" id="CLU_1346350_0_0_2"/>
<dbReference type="OrthoDB" id="141952at2157"/>
<dbReference type="EvolutionaryTrace" id="O29901"/>
<dbReference type="Proteomes" id="UP000002199">
    <property type="component" value="Chromosome"/>
</dbReference>
<dbReference type="GO" id="GO:0005737">
    <property type="term" value="C:cytoplasm"/>
    <property type="evidence" value="ECO:0007669"/>
    <property type="project" value="UniProtKB-SubCell"/>
</dbReference>
<dbReference type="GO" id="GO:0051539">
    <property type="term" value="F:4 iron, 4 sulfur cluster binding"/>
    <property type="evidence" value="ECO:0007669"/>
    <property type="project" value="UniProtKB-KW"/>
</dbReference>
<dbReference type="GO" id="GO:0046872">
    <property type="term" value="F:metal ion binding"/>
    <property type="evidence" value="ECO:0007669"/>
    <property type="project" value="UniProtKB-KW"/>
</dbReference>
<dbReference type="CDD" id="cd10141">
    <property type="entry name" value="CopZ-like_Fer2_BFD-like"/>
    <property type="match status" value="1"/>
</dbReference>
<dbReference type="CDD" id="cd00371">
    <property type="entry name" value="HMA"/>
    <property type="match status" value="1"/>
</dbReference>
<dbReference type="Gene3D" id="2.20.25.270">
    <property type="match status" value="1"/>
</dbReference>
<dbReference type="Gene3D" id="3.30.70.100">
    <property type="match status" value="1"/>
</dbReference>
<dbReference type="Gene3D" id="1.10.10.1100">
    <property type="entry name" value="BFD-like [2Fe-2S]-binding domain"/>
    <property type="match status" value="1"/>
</dbReference>
<dbReference type="InterPro" id="IPR041854">
    <property type="entry name" value="BFD-like_2Fe2S-bd_dom_sf"/>
</dbReference>
<dbReference type="InterPro" id="IPR017969">
    <property type="entry name" value="Heavy-metal-associated_CS"/>
</dbReference>
<dbReference type="InterPro" id="IPR006121">
    <property type="entry name" value="HMA_dom"/>
</dbReference>
<dbReference type="InterPro" id="IPR036163">
    <property type="entry name" value="HMA_dom_sf"/>
</dbReference>
<dbReference type="InterPro" id="IPR040890">
    <property type="entry name" value="Znf_CopZ"/>
</dbReference>
<dbReference type="Pfam" id="PF00403">
    <property type="entry name" value="HMA"/>
    <property type="match status" value="1"/>
</dbReference>
<dbReference type="Pfam" id="PF18423">
    <property type="entry name" value="zf_CopZ"/>
    <property type="match status" value="1"/>
</dbReference>
<dbReference type="SUPFAM" id="SSF55008">
    <property type="entry name" value="HMA, heavy metal-associated domain"/>
    <property type="match status" value="1"/>
</dbReference>
<dbReference type="PROSITE" id="PS01047">
    <property type="entry name" value="HMA_1"/>
    <property type="match status" value="1"/>
</dbReference>
<dbReference type="PROSITE" id="PS50846">
    <property type="entry name" value="HMA_2"/>
    <property type="match status" value="1"/>
</dbReference>
<proteinExistence type="evidence at protein level"/>
<reference key="1">
    <citation type="journal article" date="1997" name="Nature">
        <title>The complete genome sequence of the hyperthermophilic, sulphate-reducing archaeon Archaeoglobus fulgidus.</title>
        <authorList>
            <person name="Klenk H.-P."/>
            <person name="Clayton R.A."/>
            <person name="Tomb J.-F."/>
            <person name="White O."/>
            <person name="Nelson K.E."/>
            <person name="Ketchum K.A."/>
            <person name="Dodson R.J."/>
            <person name="Gwinn M.L."/>
            <person name="Hickey E.K."/>
            <person name="Peterson J.D."/>
            <person name="Richardson D.L."/>
            <person name="Kerlavage A.R."/>
            <person name="Graham D.E."/>
            <person name="Kyrpides N.C."/>
            <person name="Fleischmann R.D."/>
            <person name="Quackenbush J."/>
            <person name="Lee N.H."/>
            <person name="Sutton G.G."/>
            <person name="Gill S.R."/>
            <person name="Kirkness E.F."/>
            <person name="Dougherty B.A."/>
            <person name="McKenney K."/>
            <person name="Adams M.D."/>
            <person name="Loftus B.J."/>
            <person name="Peterson S.N."/>
            <person name="Reich C.I."/>
            <person name="McNeil L.K."/>
            <person name="Badger J.H."/>
            <person name="Glodek A."/>
            <person name="Zhou L."/>
            <person name="Overbeek R."/>
            <person name="Gocayne J.D."/>
            <person name="Weidman J.F."/>
            <person name="McDonald L.A."/>
            <person name="Utterback T.R."/>
            <person name="Cotton M.D."/>
            <person name="Spriggs T."/>
            <person name="Artiach P."/>
            <person name="Kaine B.P."/>
            <person name="Sykes S.M."/>
            <person name="Sadow P.W."/>
            <person name="D'Andrea K.P."/>
            <person name="Bowman C."/>
            <person name="Fujii C."/>
            <person name="Garland S.A."/>
            <person name="Mason T.M."/>
            <person name="Olsen G.J."/>
            <person name="Fraser C.M."/>
            <person name="Smith H.O."/>
            <person name="Woese C.R."/>
            <person name="Venter J.C."/>
        </authorList>
    </citation>
    <scope>NUCLEOTIDE SEQUENCE [LARGE SCALE GENOMIC DNA]</scope>
    <source>
        <strain>ATCC 49558 / DSM 4304 / JCM 9628 / NBRC 100126 / VC-16</strain>
    </source>
</reference>
<reference key="2">
    <citation type="journal article" date="2008" name="Proc. Natl. Acad. Sci. U.S.A.">
        <title>Mechanism of Cu+-transporting ATPases: soluble Cu+ chaperones directly transfer Cu+ to transmembrane transport sites.</title>
        <authorList>
            <person name="Gonzalez-Guerrero M."/>
            <person name="Arguello J.M."/>
        </authorList>
    </citation>
    <scope>FUNCTION IN COPPER DELIVERY</scope>
    <scope>SUBUNIT</scope>
</reference>
<reference key="3">
    <citation type="journal article" date="2007" name="J. Biol. Chem.">
        <title>Characterization and structure of a Zn2+ and [2Fe-2S]-containing copper chaperone from Archaeoglobus fulgidus.</title>
        <authorList>
            <person name="Sazinsky M.H."/>
            <person name="LeMoine B."/>
            <person name="Orofino M."/>
            <person name="Davydov R."/>
            <person name="Bencze K.Z."/>
            <person name="Stemmler T.L."/>
            <person name="Hoffman B.M."/>
            <person name="Arguello J.M."/>
            <person name="Rosenzweig A.C."/>
        </authorList>
    </citation>
    <scope>X-RAY CRYSTALLOGRAPHY (1.78 ANGSTROMS) OF 1-130</scope>
    <scope>FUNCTION</scope>
    <scope>COFACTOR</scope>
    <scope>SUBUNIT</scope>
    <scope>MUTAGENESIS OF CYS-75; CYS-77; CYS-109; CYS-118 AND CYS-119</scope>
    <source>
        <strain>ATCC 49558 / DSM 4304 / JCM 9628 / NBRC 100126 / VC-16</strain>
    </source>
</reference>
<gene>
    <name type="primary">copZ</name>
    <name type="ordered locus">AF_0346</name>
</gene>
<protein>
    <recommendedName>
        <fullName>Copper chaperone CopZ</fullName>
    </recommendedName>
</protein>
<keyword id="KW-0002">3D-structure</keyword>
<keyword id="KW-0004">4Fe-4S</keyword>
<keyword id="KW-0143">Chaperone</keyword>
<keyword id="KW-0186">Copper</keyword>
<keyword id="KW-0963">Cytoplasm</keyword>
<keyword id="KW-0408">Iron</keyword>
<keyword id="KW-0411">Iron-sulfur</keyword>
<keyword id="KW-0479">Metal-binding</keyword>
<keyword id="KW-1185">Reference proteome</keyword>
<keyword id="KW-0862">Zinc</keyword>
<accession>O29901</accession>
<evidence type="ECO:0000250" key="1"/>
<evidence type="ECO:0000255" key="2">
    <source>
        <dbReference type="PROSITE-ProRule" id="PRU00280"/>
    </source>
</evidence>
<evidence type="ECO:0000269" key="3">
    <source>
    </source>
</evidence>
<evidence type="ECO:0000269" key="4">
    <source>
    </source>
</evidence>
<evidence type="ECO:0000305" key="5"/>
<evidence type="ECO:0007829" key="6">
    <source>
        <dbReference type="PDB" id="2HU9"/>
    </source>
</evidence>
<feature type="chain" id="PRO_0000351288" description="Copper chaperone CopZ">
    <location>
        <begin position="1"/>
        <end position="204"/>
    </location>
</feature>
<feature type="domain" description="HMA" evidence="2">
    <location>
        <begin position="138"/>
        <end position="200"/>
    </location>
</feature>
<feature type="binding site">
    <location>
        <position position="4"/>
    </location>
    <ligand>
        <name>Zn(2+)</name>
        <dbReference type="ChEBI" id="CHEBI:29105"/>
    </ligand>
</feature>
<feature type="binding site">
    <location>
        <position position="7"/>
    </location>
    <ligand>
        <name>Zn(2+)</name>
        <dbReference type="ChEBI" id="CHEBI:29105"/>
    </ligand>
</feature>
<feature type="binding site">
    <location>
        <position position="38"/>
    </location>
    <ligand>
        <name>Zn(2+)</name>
        <dbReference type="ChEBI" id="CHEBI:29105"/>
    </ligand>
</feature>
<feature type="binding site">
    <location>
        <position position="43"/>
    </location>
    <ligand>
        <name>Zn(2+)</name>
        <dbReference type="ChEBI" id="CHEBI:29105"/>
    </ligand>
</feature>
<feature type="binding site">
    <location>
        <position position="75"/>
    </location>
    <ligand>
        <name>[2Fe-2S] cluster</name>
        <dbReference type="ChEBI" id="CHEBI:190135"/>
    </ligand>
</feature>
<feature type="binding site">
    <location>
        <position position="77"/>
    </location>
    <ligand>
        <name>[2Fe-2S] cluster</name>
        <dbReference type="ChEBI" id="CHEBI:190135"/>
    </ligand>
</feature>
<feature type="binding site">
    <location>
        <position position="109"/>
    </location>
    <ligand>
        <name>[2Fe-2S] cluster</name>
        <dbReference type="ChEBI" id="CHEBI:190135"/>
    </ligand>
</feature>
<feature type="binding site">
    <location>
        <position position="119"/>
    </location>
    <ligand>
        <name>[2Fe-2S] cluster</name>
        <dbReference type="ChEBI" id="CHEBI:190135"/>
    </ligand>
</feature>
<feature type="binding site" evidence="2">
    <location>
        <position position="149"/>
    </location>
    <ligand>
        <name>Cu cation</name>
        <dbReference type="ChEBI" id="CHEBI:23378"/>
    </ligand>
</feature>
<feature type="binding site" evidence="2">
    <location>
        <position position="152"/>
    </location>
    <ligand>
        <name>Cu cation</name>
        <dbReference type="ChEBI" id="CHEBI:23378"/>
    </ligand>
</feature>
<feature type="mutagenesis site" description="Alters iron-sulfur binding." evidence="3">
    <original>C</original>
    <variation>S</variation>
    <location>
        <position position="75"/>
    </location>
</feature>
<feature type="mutagenesis site" description="Alters iron-sulfur binding." evidence="3">
    <original>C</original>
    <variation>S</variation>
    <location>
        <position position="77"/>
    </location>
</feature>
<feature type="mutagenesis site" description="Alters iron-sulfur binding." evidence="3">
    <original>C</original>
    <variation>S</variation>
    <location>
        <position position="109"/>
    </location>
</feature>
<feature type="mutagenesis site" description="No effect on iron-sulfur binding." evidence="3">
    <original>C</original>
    <variation>S</variation>
    <location>
        <position position="118"/>
    </location>
</feature>
<feature type="mutagenesis site" description="Alters iron-sulfur binding." evidence="3">
    <original>C</original>
    <variation>S</variation>
    <location>
        <position position="119"/>
    </location>
</feature>
<feature type="turn" evidence="6">
    <location>
        <begin position="5"/>
        <end position="7"/>
    </location>
</feature>
<feature type="strand" evidence="6">
    <location>
        <begin position="12"/>
        <end position="14"/>
    </location>
</feature>
<feature type="helix" evidence="6">
    <location>
        <begin position="16"/>
        <end position="22"/>
    </location>
</feature>
<feature type="helix" evidence="6">
    <location>
        <begin position="25"/>
        <end position="30"/>
    </location>
</feature>
<feature type="strand" evidence="6">
    <location>
        <begin position="35"/>
        <end position="37"/>
    </location>
</feature>
<feature type="strand" evidence="6">
    <location>
        <begin position="44"/>
        <end position="48"/>
    </location>
</feature>
<feature type="strand" evidence="6">
    <location>
        <begin position="53"/>
        <end position="55"/>
    </location>
</feature>
<feature type="helix" evidence="6">
    <location>
        <begin position="56"/>
        <end position="58"/>
    </location>
</feature>
<feature type="strand" evidence="6">
    <location>
        <begin position="59"/>
        <end position="61"/>
    </location>
</feature>
<feature type="helix" evidence="6">
    <location>
        <begin position="64"/>
        <end position="66"/>
    </location>
</feature>
<feature type="strand" evidence="6">
    <location>
        <begin position="68"/>
        <end position="70"/>
    </location>
</feature>
<feature type="strand" evidence="6">
    <location>
        <begin position="73"/>
        <end position="75"/>
    </location>
</feature>
<feature type="turn" evidence="6">
    <location>
        <begin position="76"/>
        <end position="79"/>
    </location>
</feature>
<feature type="helix" evidence="6">
    <location>
        <begin position="82"/>
        <end position="92"/>
    </location>
</feature>
<feature type="helix" evidence="6">
    <location>
        <begin position="94"/>
        <end position="101"/>
    </location>
</feature>
<feature type="helix" evidence="6">
    <location>
        <begin position="109"/>
        <end position="112"/>
    </location>
</feature>
<feature type="helix" evidence="6">
    <location>
        <begin position="120"/>
        <end position="125"/>
    </location>
</feature>